<organism>
    <name type="scientific">Shewanella frigidimarina (strain NCIMB 400)</name>
    <dbReference type="NCBI Taxonomy" id="318167"/>
    <lineage>
        <taxon>Bacteria</taxon>
        <taxon>Pseudomonadati</taxon>
        <taxon>Pseudomonadota</taxon>
        <taxon>Gammaproteobacteria</taxon>
        <taxon>Alteromonadales</taxon>
        <taxon>Shewanellaceae</taxon>
        <taxon>Shewanella</taxon>
    </lineage>
</organism>
<evidence type="ECO:0000255" key="1">
    <source>
        <dbReference type="HAMAP-Rule" id="MF_00451"/>
    </source>
</evidence>
<evidence type="ECO:0000305" key="2"/>
<accession>Q080Q3</accession>
<reference key="1">
    <citation type="submission" date="2006-08" db="EMBL/GenBank/DDBJ databases">
        <title>Complete sequence of Shewanella frigidimarina NCIMB 400.</title>
        <authorList>
            <consortium name="US DOE Joint Genome Institute"/>
            <person name="Copeland A."/>
            <person name="Lucas S."/>
            <person name="Lapidus A."/>
            <person name="Barry K."/>
            <person name="Detter J.C."/>
            <person name="Glavina del Rio T."/>
            <person name="Hammon N."/>
            <person name="Israni S."/>
            <person name="Dalin E."/>
            <person name="Tice H."/>
            <person name="Pitluck S."/>
            <person name="Fredrickson J.K."/>
            <person name="Kolker E."/>
            <person name="McCuel L.A."/>
            <person name="DiChristina T."/>
            <person name="Nealson K.H."/>
            <person name="Newman D."/>
            <person name="Tiedje J.M."/>
            <person name="Zhou J."/>
            <person name="Romine M.F."/>
            <person name="Culley D.E."/>
            <person name="Serres M."/>
            <person name="Chertkov O."/>
            <person name="Brettin T."/>
            <person name="Bruce D."/>
            <person name="Han C."/>
            <person name="Tapia R."/>
            <person name="Gilna P."/>
            <person name="Schmutz J."/>
            <person name="Larimer F."/>
            <person name="Land M."/>
            <person name="Hauser L."/>
            <person name="Kyrpides N."/>
            <person name="Mikhailova N."/>
            <person name="Richardson P."/>
        </authorList>
    </citation>
    <scope>NUCLEOTIDE SEQUENCE [LARGE SCALE GENOMIC DNA]</scope>
    <source>
        <strain>NCIMB 400</strain>
    </source>
</reference>
<keyword id="KW-0067">ATP-binding</keyword>
<keyword id="KW-0963">Cytoplasm</keyword>
<keyword id="KW-0418">Kinase</keyword>
<keyword id="KW-0460">Magnesium</keyword>
<keyword id="KW-0479">Metal-binding</keyword>
<keyword id="KW-0546">Nucleotide metabolism</keyword>
<keyword id="KW-0547">Nucleotide-binding</keyword>
<keyword id="KW-0597">Phosphoprotein</keyword>
<keyword id="KW-1185">Reference proteome</keyword>
<keyword id="KW-0808">Transferase</keyword>
<sequence length="143" mass="15429">MAIERTFSIIKPDAVAKNHIGAIYNRFESAGLKIIASKMVQLSKEQAEGFYAEHSARPFFGALVSFMTSGPVMVQVLEGENAVLANREIMGATNPAEAARGTLRADYAASIDENAVHGSDAVESAAREIAYFFSADEVCPRTR</sequence>
<name>NDK_SHEFN</name>
<feature type="chain" id="PRO_0000267801" description="Nucleoside diphosphate kinase">
    <location>
        <begin position="1"/>
        <end position="143"/>
    </location>
</feature>
<feature type="active site" description="Pros-phosphohistidine intermediate" evidence="1">
    <location>
        <position position="117"/>
    </location>
</feature>
<feature type="binding site" evidence="1">
    <location>
        <position position="11"/>
    </location>
    <ligand>
        <name>ATP</name>
        <dbReference type="ChEBI" id="CHEBI:30616"/>
    </ligand>
</feature>
<feature type="binding site" evidence="1">
    <location>
        <position position="59"/>
    </location>
    <ligand>
        <name>ATP</name>
        <dbReference type="ChEBI" id="CHEBI:30616"/>
    </ligand>
</feature>
<feature type="binding site" evidence="1">
    <location>
        <position position="87"/>
    </location>
    <ligand>
        <name>ATP</name>
        <dbReference type="ChEBI" id="CHEBI:30616"/>
    </ligand>
</feature>
<feature type="binding site" evidence="1">
    <location>
        <position position="93"/>
    </location>
    <ligand>
        <name>ATP</name>
        <dbReference type="ChEBI" id="CHEBI:30616"/>
    </ligand>
</feature>
<feature type="binding site" evidence="1">
    <location>
        <position position="104"/>
    </location>
    <ligand>
        <name>ATP</name>
        <dbReference type="ChEBI" id="CHEBI:30616"/>
    </ligand>
</feature>
<feature type="binding site" evidence="1">
    <location>
        <position position="114"/>
    </location>
    <ligand>
        <name>ATP</name>
        <dbReference type="ChEBI" id="CHEBI:30616"/>
    </ligand>
</feature>
<proteinExistence type="inferred from homology"/>
<protein>
    <recommendedName>
        <fullName evidence="1">Nucleoside diphosphate kinase</fullName>
        <shortName evidence="1">NDK</shortName>
        <shortName evidence="1">NDP kinase</shortName>
        <ecNumber evidence="1">2.7.4.6</ecNumber>
    </recommendedName>
    <alternativeName>
        <fullName evidence="1">Nucleoside-2-P kinase</fullName>
    </alternativeName>
</protein>
<dbReference type="EC" id="2.7.4.6" evidence="1"/>
<dbReference type="EMBL" id="CP000447">
    <property type="protein sequence ID" value="ABI72262.1"/>
    <property type="status" value="ALT_INIT"/>
    <property type="molecule type" value="Genomic_DNA"/>
</dbReference>
<dbReference type="RefSeq" id="WP_041413046.1">
    <property type="nucleotide sequence ID" value="NC_008345.1"/>
</dbReference>
<dbReference type="SMR" id="Q080Q3"/>
<dbReference type="STRING" id="318167.Sfri_2417"/>
<dbReference type="KEGG" id="sfr:Sfri_2417"/>
<dbReference type="eggNOG" id="COG0105">
    <property type="taxonomic scope" value="Bacteria"/>
</dbReference>
<dbReference type="HOGENOM" id="CLU_060216_8_1_6"/>
<dbReference type="OrthoDB" id="9801161at2"/>
<dbReference type="Proteomes" id="UP000000684">
    <property type="component" value="Chromosome"/>
</dbReference>
<dbReference type="GO" id="GO:0005737">
    <property type="term" value="C:cytoplasm"/>
    <property type="evidence" value="ECO:0007669"/>
    <property type="project" value="UniProtKB-SubCell"/>
</dbReference>
<dbReference type="GO" id="GO:0005524">
    <property type="term" value="F:ATP binding"/>
    <property type="evidence" value="ECO:0007669"/>
    <property type="project" value="UniProtKB-UniRule"/>
</dbReference>
<dbReference type="GO" id="GO:0046872">
    <property type="term" value="F:metal ion binding"/>
    <property type="evidence" value="ECO:0007669"/>
    <property type="project" value="UniProtKB-KW"/>
</dbReference>
<dbReference type="GO" id="GO:0004550">
    <property type="term" value="F:nucleoside diphosphate kinase activity"/>
    <property type="evidence" value="ECO:0007669"/>
    <property type="project" value="UniProtKB-UniRule"/>
</dbReference>
<dbReference type="GO" id="GO:0006241">
    <property type="term" value="P:CTP biosynthetic process"/>
    <property type="evidence" value="ECO:0007669"/>
    <property type="project" value="UniProtKB-UniRule"/>
</dbReference>
<dbReference type="GO" id="GO:0006183">
    <property type="term" value="P:GTP biosynthetic process"/>
    <property type="evidence" value="ECO:0007669"/>
    <property type="project" value="UniProtKB-UniRule"/>
</dbReference>
<dbReference type="GO" id="GO:0006228">
    <property type="term" value="P:UTP biosynthetic process"/>
    <property type="evidence" value="ECO:0007669"/>
    <property type="project" value="UniProtKB-UniRule"/>
</dbReference>
<dbReference type="CDD" id="cd04413">
    <property type="entry name" value="NDPk_I"/>
    <property type="match status" value="1"/>
</dbReference>
<dbReference type="FunFam" id="3.30.70.141:FF:000001">
    <property type="entry name" value="Nucleoside diphosphate kinase"/>
    <property type="match status" value="1"/>
</dbReference>
<dbReference type="Gene3D" id="3.30.70.141">
    <property type="entry name" value="Nucleoside diphosphate kinase-like domain"/>
    <property type="match status" value="1"/>
</dbReference>
<dbReference type="HAMAP" id="MF_00451">
    <property type="entry name" value="NDP_kinase"/>
    <property type="match status" value="1"/>
</dbReference>
<dbReference type="InterPro" id="IPR034907">
    <property type="entry name" value="NDK-like_dom"/>
</dbReference>
<dbReference type="InterPro" id="IPR036850">
    <property type="entry name" value="NDK-like_dom_sf"/>
</dbReference>
<dbReference type="InterPro" id="IPR001564">
    <property type="entry name" value="Nucleoside_diP_kinase"/>
</dbReference>
<dbReference type="InterPro" id="IPR023005">
    <property type="entry name" value="Nucleoside_diP_kinase_AS"/>
</dbReference>
<dbReference type="NCBIfam" id="NF001908">
    <property type="entry name" value="PRK00668.1"/>
    <property type="match status" value="1"/>
</dbReference>
<dbReference type="PANTHER" id="PTHR46161">
    <property type="entry name" value="NUCLEOSIDE DIPHOSPHATE KINASE"/>
    <property type="match status" value="1"/>
</dbReference>
<dbReference type="PANTHER" id="PTHR46161:SF3">
    <property type="entry name" value="NUCLEOSIDE DIPHOSPHATE KINASE DDB_G0292928-RELATED"/>
    <property type="match status" value="1"/>
</dbReference>
<dbReference type="Pfam" id="PF00334">
    <property type="entry name" value="NDK"/>
    <property type="match status" value="1"/>
</dbReference>
<dbReference type="PRINTS" id="PR01243">
    <property type="entry name" value="NUCDPKINASE"/>
</dbReference>
<dbReference type="SMART" id="SM00562">
    <property type="entry name" value="NDK"/>
    <property type="match status" value="1"/>
</dbReference>
<dbReference type="SUPFAM" id="SSF54919">
    <property type="entry name" value="Nucleoside diphosphate kinase, NDK"/>
    <property type="match status" value="1"/>
</dbReference>
<dbReference type="PROSITE" id="PS00469">
    <property type="entry name" value="NDPK"/>
    <property type="match status" value="1"/>
</dbReference>
<dbReference type="PROSITE" id="PS51374">
    <property type="entry name" value="NDPK_LIKE"/>
    <property type="match status" value="1"/>
</dbReference>
<comment type="function">
    <text evidence="1">Major role in the synthesis of nucleoside triphosphates other than ATP. The ATP gamma phosphate is transferred to the NDP beta phosphate via a ping-pong mechanism, using a phosphorylated active-site intermediate.</text>
</comment>
<comment type="catalytic activity">
    <reaction evidence="1">
        <text>a 2'-deoxyribonucleoside 5'-diphosphate + ATP = a 2'-deoxyribonucleoside 5'-triphosphate + ADP</text>
        <dbReference type="Rhea" id="RHEA:44640"/>
        <dbReference type="ChEBI" id="CHEBI:30616"/>
        <dbReference type="ChEBI" id="CHEBI:61560"/>
        <dbReference type="ChEBI" id="CHEBI:73316"/>
        <dbReference type="ChEBI" id="CHEBI:456216"/>
        <dbReference type="EC" id="2.7.4.6"/>
    </reaction>
</comment>
<comment type="catalytic activity">
    <reaction evidence="1">
        <text>a ribonucleoside 5'-diphosphate + ATP = a ribonucleoside 5'-triphosphate + ADP</text>
        <dbReference type="Rhea" id="RHEA:18113"/>
        <dbReference type="ChEBI" id="CHEBI:30616"/>
        <dbReference type="ChEBI" id="CHEBI:57930"/>
        <dbReference type="ChEBI" id="CHEBI:61557"/>
        <dbReference type="ChEBI" id="CHEBI:456216"/>
        <dbReference type="EC" id="2.7.4.6"/>
    </reaction>
</comment>
<comment type="cofactor">
    <cofactor evidence="1">
        <name>Mg(2+)</name>
        <dbReference type="ChEBI" id="CHEBI:18420"/>
    </cofactor>
</comment>
<comment type="subunit">
    <text evidence="1">Homotetramer.</text>
</comment>
<comment type="subcellular location">
    <subcellularLocation>
        <location evidence="1">Cytoplasm</location>
    </subcellularLocation>
</comment>
<comment type="similarity">
    <text evidence="1">Belongs to the NDK family.</text>
</comment>
<comment type="sequence caution" evidence="2">
    <conflict type="erroneous initiation">
        <sequence resource="EMBL-CDS" id="ABI72262"/>
    </conflict>
</comment>
<gene>
    <name evidence="1" type="primary">ndk</name>
    <name type="ordered locus">Sfri_2417</name>
</gene>